<gene>
    <name type="ordered locus">gbs1423</name>
</gene>
<reference key="1">
    <citation type="journal article" date="2002" name="Mol. Microbiol.">
        <title>Genome sequence of Streptococcus agalactiae, a pathogen causing invasive neonatal disease.</title>
        <authorList>
            <person name="Glaser P."/>
            <person name="Rusniok C."/>
            <person name="Buchrieser C."/>
            <person name="Chevalier F."/>
            <person name="Frangeul L."/>
            <person name="Msadek T."/>
            <person name="Zouine M."/>
            <person name="Couve E."/>
            <person name="Lalioui L."/>
            <person name="Poyart C."/>
            <person name="Trieu-Cuot P."/>
            <person name="Kunst F."/>
        </authorList>
    </citation>
    <scope>NUCLEOTIDE SEQUENCE [LARGE SCALE GENOMIC DNA]</scope>
    <source>
        <strain>NEM316</strain>
    </source>
</reference>
<keyword id="KW-0274">FAD</keyword>
<keyword id="KW-0285">Flavoprotein</keyword>
<keyword id="KW-0521">NADP</keyword>
<keyword id="KW-0560">Oxidoreductase</keyword>
<name>FENR_STRA3</name>
<accession>Q8E4H8</accession>
<protein>
    <recommendedName>
        <fullName evidence="1">Ferredoxin--NADP reductase</fullName>
        <shortName evidence="1">FNR</shortName>
        <shortName evidence="1">Fd-NADP(+) reductase</shortName>
        <ecNumber evidence="1">1.18.1.2</ecNumber>
    </recommendedName>
</protein>
<proteinExistence type="inferred from homology"/>
<organism>
    <name type="scientific">Streptococcus agalactiae serotype III (strain NEM316)</name>
    <dbReference type="NCBI Taxonomy" id="211110"/>
    <lineage>
        <taxon>Bacteria</taxon>
        <taxon>Bacillati</taxon>
        <taxon>Bacillota</taxon>
        <taxon>Bacilli</taxon>
        <taxon>Lactobacillales</taxon>
        <taxon>Streptococcaceae</taxon>
        <taxon>Streptococcus</taxon>
    </lineage>
</organism>
<evidence type="ECO:0000255" key="1">
    <source>
        <dbReference type="HAMAP-Rule" id="MF_01685"/>
    </source>
</evidence>
<feature type="chain" id="PRO_0000364951" description="Ferredoxin--NADP reductase">
    <location>
        <begin position="1"/>
        <end position="330"/>
    </location>
</feature>
<feature type="binding site" evidence="1">
    <location>
        <position position="35"/>
    </location>
    <ligand>
        <name>FAD</name>
        <dbReference type="ChEBI" id="CHEBI:57692"/>
    </ligand>
</feature>
<feature type="binding site" evidence="1">
    <location>
        <position position="43"/>
    </location>
    <ligand>
        <name>FAD</name>
        <dbReference type="ChEBI" id="CHEBI:57692"/>
    </ligand>
</feature>
<feature type="binding site" evidence="1">
    <location>
        <position position="48"/>
    </location>
    <ligand>
        <name>FAD</name>
        <dbReference type="ChEBI" id="CHEBI:57692"/>
    </ligand>
</feature>
<feature type="binding site" evidence="1">
    <location>
        <position position="90"/>
    </location>
    <ligand>
        <name>FAD</name>
        <dbReference type="ChEBI" id="CHEBI:57692"/>
    </ligand>
</feature>
<feature type="binding site" evidence="1">
    <location>
        <position position="123"/>
    </location>
    <ligand>
        <name>FAD</name>
        <dbReference type="ChEBI" id="CHEBI:57692"/>
    </ligand>
</feature>
<feature type="binding site" evidence="1">
    <location>
        <position position="285"/>
    </location>
    <ligand>
        <name>FAD</name>
        <dbReference type="ChEBI" id="CHEBI:57692"/>
    </ligand>
</feature>
<feature type="binding site" evidence="1">
    <location>
        <position position="326"/>
    </location>
    <ligand>
        <name>FAD</name>
        <dbReference type="ChEBI" id="CHEBI:57692"/>
    </ligand>
</feature>
<comment type="catalytic activity">
    <reaction evidence="1">
        <text>2 reduced [2Fe-2S]-[ferredoxin] + NADP(+) + H(+) = 2 oxidized [2Fe-2S]-[ferredoxin] + NADPH</text>
        <dbReference type="Rhea" id="RHEA:20125"/>
        <dbReference type="Rhea" id="RHEA-COMP:10000"/>
        <dbReference type="Rhea" id="RHEA-COMP:10001"/>
        <dbReference type="ChEBI" id="CHEBI:15378"/>
        <dbReference type="ChEBI" id="CHEBI:33737"/>
        <dbReference type="ChEBI" id="CHEBI:33738"/>
        <dbReference type="ChEBI" id="CHEBI:57783"/>
        <dbReference type="ChEBI" id="CHEBI:58349"/>
        <dbReference type="EC" id="1.18.1.2"/>
    </reaction>
</comment>
<comment type="cofactor">
    <cofactor evidence="1">
        <name>FAD</name>
        <dbReference type="ChEBI" id="CHEBI:57692"/>
    </cofactor>
    <text evidence="1">Binds 1 FAD per subunit.</text>
</comment>
<comment type="subunit">
    <text evidence="1">Homodimer.</text>
</comment>
<comment type="similarity">
    <text evidence="1">Belongs to the ferredoxin--NADP reductase type 2 family.</text>
</comment>
<sequence length="330" mass="36387">MNKTIYDITIVGGGPVGLFAAFYAGLRGVSVKIIESLSELGGQPAILYPEKKIYDIPGYPVITGRELIDKHIEQLERFKDSIEICLKEEVLSFEKVDDVFTIQTDKDQHLSRAIVFACGNGAFAPRLLGLENEENYADNNLFYNVTKLEQFAGKHVVICGGGDSAVDWANELDKIAASVAIVHRRDAFRAHEHSVDILKASGVRILTPYVPIGLNGDSQRVSSLVVQKVKGDEVIELPLDNLIVSFGFSTSNKNLRYWNLDYKRSSINVSSLFETTQEGVYAIGDAANYPGKVELIATGYGEAPVAINQAINYIYPDRDNRVVHSTSLIK</sequence>
<dbReference type="EC" id="1.18.1.2" evidence="1"/>
<dbReference type="EMBL" id="AL766850">
    <property type="protein sequence ID" value="CAD47082.1"/>
    <property type="molecule type" value="Genomic_DNA"/>
</dbReference>
<dbReference type="RefSeq" id="WP_001044158.1">
    <property type="nucleotide sequence ID" value="NC_004368.1"/>
</dbReference>
<dbReference type="SMR" id="Q8E4H8"/>
<dbReference type="KEGG" id="san:gbs1423"/>
<dbReference type="eggNOG" id="COG0492">
    <property type="taxonomic scope" value="Bacteria"/>
</dbReference>
<dbReference type="HOGENOM" id="CLU_031864_5_5_9"/>
<dbReference type="Proteomes" id="UP000000823">
    <property type="component" value="Chromosome"/>
</dbReference>
<dbReference type="GO" id="GO:0004324">
    <property type="term" value="F:ferredoxin-NADP+ reductase activity"/>
    <property type="evidence" value="ECO:0007669"/>
    <property type="project" value="UniProtKB-UniRule"/>
</dbReference>
<dbReference type="GO" id="GO:0050660">
    <property type="term" value="F:flavin adenine dinucleotide binding"/>
    <property type="evidence" value="ECO:0007669"/>
    <property type="project" value="UniProtKB-UniRule"/>
</dbReference>
<dbReference type="GO" id="GO:0050661">
    <property type="term" value="F:NADP binding"/>
    <property type="evidence" value="ECO:0007669"/>
    <property type="project" value="UniProtKB-UniRule"/>
</dbReference>
<dbReference type="Gene3D" id="3.50.50.60">
    <property type="entry name" value="FAD/NAD(P)-binding domain"/>
    <property type="match status" value="2"/>
</dbReference>
<dbReference type="HAMAP" id="MF_01685">
    <property type="entry name" value="FENR2"/>
    <property type="match status" value="1"/>
</dbReference>
<dbReference type="InterPro" id="IPR036188">
    <property type="entry name" value="FAD/NAD-bd_sf"/>
</dbReference>
<dbReference type="InterPro" id="IPR023753">
    <property type="entry name" value="FAD/NAD-binding_dom"/>
</dbReference>
<dbReference type="InterPro" id="IPR022890">
    <property type="entry name" value="Fd--NADP_Rdtase_type_2"/>
</dbReference>
<dbReference type="InterPro" id="IPR050097">
    <property type="entry name" value="Ferredoxin-NADP_redctase_2"/>
</dbReference>
<dbReference type="PANTHER" id="PTHR48105">
    <property type="entry name" value="THIOREDOXIN REDUCTASE 1-RELATED-RELATED"/>
    <property type="match status" value="1"/>
</dbReference>
<dbReference type="Pfam" id="PF07992">
    <property type="entry name" value="Pyr_redox_2"/>
    <property type="match status" value="1"/>
</dbReference>
<dbReference type="PRINTS" id="PR00368">
    <property type="entry name" value="FADPNR"/>
</dbReference>
<dbReference type="PRINTS" id="PR00469">
    <property type="entry name" value="PNDRDTASEII"/>
</dbReference>
<dbReference type="SUPFAM" id="SSF51905">
    <property type="entry name" value="FAD/NAD(P)-binding domain"/>
    <property type="match status" value="1"/>
</dbReference>